<feature type="chain" id="PRO_0000082848" description="Peptide deformylase">
    <location>
        <begin position="1"/>
        <end position="204"/>
    </location>
</feature>
<feature type="active site" evidence="1">
    <location>
        <position position="175"/>
    </location>
</feature>
<feature type="binding site" evidence="1">
    <location>
        <position position="131"/>
    </location>
    <ligand>
        <name>Fe cation</name>
        <dbReference type="ChEBI" id="CHEBI:24875"/>
    </ligand>
</feature>
<feature type="binding site" evidence="1">
    <location>
        <position position="174"/>
    </location>
    <ligand>
        <name>Fe cation</name>
        <dbReference type="ChEBI" id="CHEBI:24875"/>
    </ligand>
</feature>
<feature type="binding site" evidence="1">
    <location>
        <position position="178"/>
    </location>
    <ligand>
        <name>Fe cation</name>
        <dbReference type="ChEBI" id="CHEBI:24875"/>
    </ligand>
</feature>
<sequence length="204" mass="22830">MSAIDKLVKASHLIDMNDIIREGNPTLRKVAEEVTFPLSEKEEILGEKMMQFLKHSQDPIMAEKLGLRGGVGLAAPQLDISKRIIAVLVPNVEDAQGNPPKEAYSLQEVMYNPKVVSHSVQDAALSDGEGCLSVDREVPGYVVRHARVTIEYFDKTGEKHRLKLKGYNSIVVQHEIDHIDGIMFYDRINEKNPFAVKEGLLILE</sequence>
<proteinExistence type="inferred from homology"/>
<gene>
    <name evidence="1" type="primary">def</name>
    <name type="ordered locus">SAG1895</name>
</gene>
<name>DEF_STRA5</name>
<reference key="1">
    <citation type="journal article" date="2002" name="Proc. Natl. Acad. Sci. U.S.A.">
        <title>Complete genome sequence and comparative genomic analysis of an emerging human pathogen, serotype V Streptococcus agalactiae.</title>
        <authorList>
            <person name="Tettelin H."/>
            <person name="Masignani V."/>
            <person name="Cieslewicz M.J."/>
            <person name="Eisen J.A."/>
            <person name="Peterson S.N."/>
            <person name="Wessels M.R."/>
            <person name="Paulsen I.T."/>
            <person name="Nelson K.E."/>
            <person name="Margarit I."/>
            <person name="Read T.D."/>
            <person name="Madoff L.C."/>
            <person name="Wolf A.M."/>
            <person name="Beanan M.J."/>
            <person name="Brinkac L.M."/>
            <person name="Daugherty S.C."/>
            <person name="DeBoy R.T."/>
            <person name="Durkin A.S."/>
            <person name="Kolonay J.F."/>
            <person name="Madupu R."/>
            <person name="Lewis M.R."/>
            <person name="Radune D."/>
            <person name="Fedorova N.B."/>
            <person name="Scanlan D."/>
            <person name="Khouri H.M."/>
            <person name="Mulligan S."/>
            <person name="Carty H.A."/>
            <person name="Cline R.T."/>
            <person name="Van Aken S.E."/>
            <person name="Gill J."/>
            <person name="Scarselli M."/>
            <person name="Mora M."/>
            <person name="Iacobini E.T."/>
            <person name="Brettoni C."/>
            <person name="Galli G."/>
            <person name="Mariani M."/>
            <person name="Vegni F."/>
            <person name="Maione D."/>
            <person name="Rinaudo D."/>
            <person name="Rappuoli R."/>
            <person name="Telford J.L."/>
            <person name="Kasper D.L."/>
            <person name="Grandi G."/>
            <person name="Fraser C.M."/>
        </authorList>
    </citation>
    <scope>NUCLEOTIDE SEQUENCE [LARGE SCALE GENOMIC DNA]</scope>
    <source>
        <strain>ATCC BAA-611 / 2603 V/R</strain>
    </source>
</reference>
<organism>
    <name type="scientific">Streptococcus agalactiae serotype V (strain ATCC BAA-611 / 2603 V/R)</name>
    <dbReference type="NCBI Taxonomy" id="208435"/>
    <lineage>
        <taxon>Bacteria</taxon>
        <taxon>Bacillati</taxon>
        <taxon>Bacillota</taxon>
        <taxon>Bacilli</taxon>
        <taxon>Lactobacillales</taxon>
        <taxon>Streptococcaceae</taxon>
        <taxon>Streptococcus</taxon>
    </lineage>
</organism>
<evidence type="ECO:0000255" key="1">
    <source>
        <dbReference type="HAMAP-Rule" id="MF_00163"/>
    </source>
</evidence>
<keyword id="KW-0378">Hydrolase</keyword>
<keyword id="KW-0408">Iron</keyword>
<keyword id="KW-0479">Metal-binding</keyword>
<keyword id="KW-0648">Protein biosynthesis</keyword>
<keyword id="KW-1185">Reference proteome</keyword>
<dbReference type="EC" id="3.5.1.88" evidence="1"/>
<dbReference type="EMBL" id="AE009948">
    <property type="protein sequence ID" value="AAN00757.1"/>
    <property type="molecule type" value="Genomic_DNA"/>
</dbReference>
<dbReference type="RefSeq" id="NP_688884.1">
    <property type="nucleotide sequence ID" value="NC_004116.1"/>
</dbReference>
<dbReference type="RefSeq" id="WP_001272875.1">
    <property type="nucleotide sequence ID" value="NC_004116.1"/>
</dbReference>
<dbReference type="SMR" id="Q8DXF6"/>
<dbReference type="STRING" id="208435.SAG1895"/>
<dbReference type="GeneID" id="66886680"/>
<dbReference type="KEGG" id="sag:SAG1895"/>
<dbReference type="PATRIC" id="fig|208435.3.peg.1900"/>
<dbReference type="HOGENOM" id="CLU_061901_4_0_9"/>
<dbReference type="OrthoDB" id="9784988at2"/>
<dbReference type="Proteomes" id="UP000000821">
    <property type="component" value="Chromosome"/>
</dbReference>
<dbReference type="GO" id="GO:0046872">
    <property type="term" value="F:metal ion binding"/>
    <property type="evidence" value="ECO:0007669"/>
    <property type="project" value="UniProtKB-KW"/>
</dbReference>
<dbReference type="GO" id="GO:0042586">
    <property type="term" value="F:peptide deformylase activity"/>
    <property type="evidence" value="ECO:0007669"/>
    <property type="project" value="UniProtKB-UniRule"/>
</dbReference>
<dbReference type="GO" id="GO:0043686">
    <property type="term" value="P:co-translational protein modification"/>
    <property type="evidence" value="ECO:0007669"/>
    <property type="project" value="TreeGrafter"/>
</dbReference>
<dbReference type="GO" id="GO:0006412">
    <property type="term" value="P:translation"/>
    <property type="evidence" value="ECO:0007669"/>
    <property type="project" value="UniProtKB-UniRule"/>
</dbReference>
<dbReference type="CDD" id="cd00487">
    <property type="entry name" value="Pep_deformylase"/>
    <property type="match status" value="1"/>
</dbReference>
<dbReference type="FunFam" id="3.90.45.10:FF:000002">
    <property type="entry name" value="Peptide deformylase"/>
    <property type="match status" value="1"/>
</dbReference>
<dbReference type="Gene3D" id="3.90.45.10">
    <property type="entry name" value="Peptide deformylase"/>
    <property type="match status" value="1"/>
</dbReference>
<dbReference type="HAMAP" id="MF_00163">
    <property type="entry name" value="Pep_deformylase"/>
    <property type="match status" value="1"/>
</dbReference>
<dbReference type="InterPro" id="IPR023635">
    <property type="entry name" value="Peptide_deformylase"/>
</dbReference>
<dbReference type="InterPro" id="IPR036821">
    <property type="entry name" value="Peptide_deformylase_sf"/>
</dbReference>
<dbReference type="NCBIfam" id="TIGR00079">
    <property type="entry name" value="pept_deformyl"/>
    <property type="match status" value="1"/>
</dbReference>
<dbReference type="PANTHER" id="PTHR10458">
    <property type="entry name" value="PEPTIDE DEFORMYLASE"/>
    <property type="match status" value="1"/>
</dbReference>
<dbReference type="PANTHER" id="PTHR10458:SF8">
    <property type="entry name" value="PEPTIDE DEFORMYLASE 2"/>
    <property type="match status" value="1"/>
</dbReference>
<dbReference type="Pfam" id="PF01327">
    <property type="entry name" value="Pep_deformylase"/>
    <property type="match status" value="1"/>
</dbReference>
<dbReference type="PIRSF" id="PIRSF004749">
    <property type="entry name" value="Pep_def"/>
    <property type="match status" value="1"/>
</dbReference>
<dbReference type="PRINTS" id="PR01576">
    <property type="entry name" value="PDEFORMYLASE"/>
</dbReference>
<dbReference type="SUPFAM" id="SSF56420">
    <property type="entry name" value="Peptide deformylase"/>
    <property type="match status" value="1"/>
</dbReference>
<comment type="function">
    <text evidence="1">Removes the formyl group from the N-terminal Met of newly synthesized proteins. Requires at least a dipeptide for an efficient rate of reaction. N-terminal L-methionine is a prerequisite for activity but the enzyme has broad specificity at other positions.</text>
</comment>
<comment type="catalytic activity">
    <reaction evidence="1">
        <text>N-terminal N-formyl-L-methionyl-[peptide] + H2O = N-terminal L-methionyl-[peptide] + formate</text>
        <dbReference type="Rhea" id="RHEA:24420"/>
        <dbReference type="Rhea" id="RHEA-COMP:10639"/>
        <dbReference type="Rhea" id="RHEA-COMP:10640"/>
        <dbReference type="ChEBI" id="CHEBI:15377"/>
        <dbReference type="ChEBI" id="CHEBI:15740"/>
        <dbReference type="ChEBI" id="CHEBI:49298"/>
        <dbReference type="ChEBI" id="CHEBI:64731"/>
        <dbReference type="EC" id="3.5.1.88"/>
    </reaction>
</comment>
<comment type="cofactor">
    <cofactor evidence="1">
        <name>Fe(2+)</name>
        <dbReference type="ChEBI" id="CHEBI:29033"/>
    </cofactor>
    <text evidence="1">Binds 1 Fe(2+) ion.</text>
</comment>
<comment type="similarity">
    <text evidence="1">Belongs to the polypeptide deformylase family.</text>
</comment>
<protein>
    <recommendedName>
        <fullName evidence="1">Peptide deformylase</fullName>
        <shortName evidence="1">PDF</shortName>
        <ecNumber evidence="1">3.5.1.88</ecNumber>
    </recommendedName>
    <alternativeName>
        <fullName evidence="1">Polypeptide deformylase</fullName>
    </alternativeName>
</protein>
<accession>Q8DXF6</accession>